<name>YBEY_RHIWR</name>
<reference key="1">
    <citation type="journal article" date="2010" name="J. Bacteriol.">
        <title>Genome sequence of the dioxin-mineralizing bacterium Sphingomonas wittichii RW1.</title>
        <authorList>
            <person name="Miller T.R."/>
            <person name="Delcher A.L."/>
            <person name="Salzberg S.L."/>
            <person name="Saunders E."/>
            <person name="Detter J.C."/>
            <person name="Halden R.U."/>
        </authorList>
    </citation>
    <scope>NUCLEOTIDE SEQUENCE [LARGE SCALE GENOMIC DNA]</scope>
    <source>
        <strain>DSM 6014 / CCUG 31198 / JCM 15750 / NBRC 105917 / EY 4224 / RW1</strain>
    </source>
</reference>
<feature type="chain" id="PRO_1000000745" description="Endoribonuclease YbeY">
    <location>
        <begin position="1"/>
        <end position="169"/>
    </location>
</feature>
<feature type="binding site" evidence="1">
    <location>
        <position position="128"/>
    </location>
    <ligand>
        <name>Zn(2+)</name>
        <dbReference type="ChEBI" id="CHEBI:29105"/>
        <note>catalytic</note>
    </ligand>
</feature>
<feature type="binding site" evidence="1">
    <location>
        <position position="132"/>
    </location>
    <ligand>
        <name>Zn(2+)</name>
        <dbReference type="ChEBI" id="CHEBI:29105"/>
        <note>catalytic</note>
    </ligand>
</feature>
<feature type="binding site" evidence="1">
    <location>
        <position position="138"/>
    </location>
    <ligand>
        <name>Zn(2+)</name>
        <dbReference type="ChEBI" id="CHEBI:29105"/>
        <note>catalytic</note>
    </ligand>
</feature>
<dbReference type="EC" id="3.1.-.-" evidence="1"/>
<dbReference type="EMBL" id="CP000699">
    <property type="protein sequence ID" value="ABQ68748.1"/>
    <property type="molecule type" value="Genomic_DNA"/>
</dbReference>
<dbReference type="SMR" id="A5V8Y2"/>
<dbReference type="STRING" id="392499.Swit_2389"/>
<dbReference type="PaxDb" id="392499-Swit_2389"/>
<dbReference type="KEGG" id="swi:Swit_2389"/>
<dbReference type="eggNOG" id="COG0319">
    <property type="taxonomic scope" value="Bacteria"/>
</dbReference>
<dbReference type="HOGENOM" id="CLU_106710_0_0_5"/>
<dbReference type="OrthoDB" id="9807740at2"/>
<dbReference type="Proteomes" id="UP000001989">
    <property type="component" value="Chromosome"/>
</dbReference>
<dbReference type="GO" id="GO:0005737">
    <property type="term" value="C:cytoplasm"/>
    <property type="evidence" value="ECO:0007669"/>
    <property type="project" value="UniProtKB-SubCell"/>
</dbReference>
<dbReference type="GO" id="GO:0004222">
    <property type="term" value="F:metalloendopeptidase activity"/>
    <property type="evidence" value="ECO:0007669"/>
    <property type="project" value="InterPro"/>
</dbReference>
<dbReference type="GO" id="GO:0004521">
    <property type="term" value="F:RNA endonuclease activity"/>
    <property type="evidence" value="ECO:0007669"/>
    <property type="project" value="UniProtKB-UniRule"/>
</dbReference>
<dbReference type="GO" id="GO:0008270">
    <property type="term" value="F:zinc ion binding"/>
    <property type="evidence" value="ECO:0007669"/>
    <property type="project" value="UniProtKB-UniRule"/>
</dbReference>
<dbReference type="GO" id="GO:0006364">
    <property type="term" value="P:rRNA processing"/>
    <property type="evidence" value="ECO:0007669"/>
    <property type="project" value="UniProtKB-UniRule"/>
</dbReference>
<dbReference type="Gene3D" id="3.40.390.30">
    <property type="entry name" value="Metalloproteases ('zincins'), catalytic domain"/>
    <property type="match status" value="1"/>
</dbReference>
<dbReference type="HAMAP" id="MF_00009">
    <property type="entry name" value="Endoribonucl_YbeY"/>
    <property type="match status" value="1"/>
</dbReference>
<dbReference type="InterPro" id="IPR023091">
    <property type="entry name" value="MetalPrtase_cat_dom_sf_prd"/>
</dbReference>
<dbReference type="InterPro" id="IPR002036">
    <property type="entry name" value="YbeY"/>
</dbReference>
<dbReference type="InterPro" id="IPR020549">
    <property type="entry name" value="YbeY_CS"/>
</dbReference>
<dbReference type="NCBIfam" id="TIGR00043">
    <property type="entry name" value="rRNA maturation RNase YbeY"/>
    <property type="match status" value="1"/>
</dbReference>
<dbReference type="PANTHER" id="PTHR46986">
    <property type="entry name" value="ENDORIBONUCLEASE YBEY, CHLOROPLASTIC"/>
    <property type="match status" value="1"/>
</dbReference>
<dbReference type="PANTHER" id="PTHR46986:SF1">
    <property type="entry name" value="ENDORIBONUCLEASE YBEY, CHLOROPLASTIC"/>
    <property type="match status" value="1"/>
</dbReference>
<dbReference type="Pfam" id="PF02130">
    <property type="entry name" value="YbeY"/>
    <property type="match status" value="1"/>
</dbReference>
<dbReference type="SUPFAM" id="SSF55486">
    <property type="entry name" value="Metalloproteases ('zincins'), catalytic domain"/>
    <property type="match status" value="1"/>
</dbReference>
<dbReference type="PROSITE" id="PS01306">
    <property type="entry name" value="UPF0054"/>
    <property type="match status" value="1"/>
</dbReference>
<sequence>MIEVAVQAEPDWADGTDWERLAIEAVTAAMRTTPHAAMLDAAYMAEVSIRLTDDDEVHALNRQYRQKDKPTNVLSFPMVQDDLIEGLDNSDDGEVLLGDIILARGVCVREAAEKGVPTAEHATHLIVHGTLHLLGYDHIEDDEAEAMEDLERVALATLGIDDPYAITED</sequence>
<proteinExistence type="inferred from homology"/>
<keyword id="KW-0963">Cytoplasm</keyword>
<keyword id="KW-0255">Endonuclease</keyword>
<keyword id="KW-0378">Hydrolase</keyword>
<keyword id="KW-0479">Metal-binding</keyword>
<keyword id="KW-0540">Nuclease</keyword>
<keyword id="KW-1185">Reference proteome</keyword>
<keyword id="KW-0690">Ribosome biogenesis</keyword>
<keyword id="KW-0698">rRNA processing</keyword>
<keyword id="KW-0862">Zinc</keyword>
<organism>
    <name type="scientific">Rhizorhabdus wittichii (strain DSM 6014 / CCUG 31198 / JCM 15750 / NBRC 105917 / EY 4224 / RW1)</name>
    <name type="common">Sphingomonas wittichii</name>
    <dbReference type="NCBI Taxonomy" id="392499"/>
    <lineage>
        <taxon>Bacteria</taxon>
        <taxon>Pseudomonadati</taxon>
        <taxon>Pseudomonadota</taxon>
        <taxon>Alphaproteobacteria</taxon>
        <taxon>Sphingomonadales</taxon>
        <taxon>Sphingomonadaceae</taxon>
        <taxon>Rhizorhabdus</taxon>
    </lineage>
</organism>
<evidence type="ECO:0000255" key="1">
    <source>
        <dbReference type="HAMAP-Rule" id="MF_00009"/>
    </source>
</evidence>
<protein>
    <recommendedName>
        <fullName evidence="1">Endoribonuclease YbeY</fullName>
        <ecNumber evidence="1">3.1.-.-</ecNumber>
    </recommendedName>
</protein>
<gene>
    <name evidence="1" type="primary">ybeY</name>
    <name type="ordered locus">Swit_2389</name>
</gene>
<comment type="function">
    <text evidence="1">Single strand-specific metallo-endoribonuclease involved in late-stage 70S ribosome quality control and in maturation of the 3' terminus of the 16S rRNA.</text>
</comment>
<comment type="cofactor">
    <cofactor evidence="1">
        <name>Zn(2+)</name>
        <dbReference type="ChEBI" id="CHEBI:29105"/>
    </cofactor>
    <text evidence="1">Binds 1 zinc ion.</text>
</comment>
<comment type="subcellular location">
    <subcellularLocation>
        <location evidence="1">Cytoplasm</location>
    </subcellularLocation>
</comment>
<comment type="similarity">
    <text evidence="1">Belongs to the endoribonuclease YbeY family.</text>
</comment>
<accession>A5V8Y2</accession>